<gene>
    <name evidence="1" type="primary">rps19</name>
    <name type="ordered locus">Mlab_0085</name>
</gene>
<dbReference type="EMBL" id="CP000559">
    <property type="protein sequence ID" value="ABN06263.1"/>
    <property type="molecule type" value="Genomic_DNA"/>
</dbReference>
<dbReference type="RefSeq" id="WP_011832464.1">
    <property type="nucleotide sequence ID" value="NC_008942.1"/>
</dbReference>
<dbReference type="SMR" id="A2SPK7"/>
<dbReference type="STRING" id="410358.Mlab_0085"/>
<dbReference type="GeneID" id="4795388"/>
<dbReference type="KEGG" id="mla:Mlab_0085"/>
<dbReference type="eggNOG" id="arCOG04099">
    <property type="taxonomic scope" value="Archaea"/>
</dbReference>
<dbReference type="HOGENOM" id="CLU_097347_1_0_2"/>
<dbReference type="OrthoDB" id="30559at2157"/>
<dbReference type="Proteomes" id="UP000000365">
    <property type="component" value="Chromosome"/>
</dbReference>
<dbReference type="GO" id="GO:0022627">
    <property type="term" value="C:cytosolic small ribosomal subunit"/>
    <property type="evidence" value="ECO:0007669"/>
    <property type="project" value="TreeGrafter"/>
</dbReference>
<dbReference type="GO" id="GO:0019843">
    <property type="term" value="F:rRNA binding"/>
    <property type="evidence" value="ECO:0007669"/>
    <property type="project" value="UniProtKB-UniRule"/>
</dbReference>
<dbReference type="GO" id="GO:0003735">
    <property type="term" value="F:structural constituent of ribosome"/>
    <property type="evidence" value="ECO:0007669"/>
    <property type="project" value="InterPro"/>
</dbReference>
<dbReference type="GO" id="GO:0000028">
    <property type="term" value="P:ribosomal small subunit assembly"/>
    <property type="evidence" value="ECO:0007669"/>
    <property type="project" value="TreeGrafter"/>
</dbReference>
<dbReference type="GO" id="GO:0006412">
    <property type="term" value="P:translation"/>
    <property type="evidence" value="ECO:0007669"/>
    <property type="project" value="UniProtKB-UniRule"/>
</dbReference>
<dbReference type="Gene3D" id="3.30.860.10">
    <property type="entry name" value="30s Ribosomal Protein S19, Chain A"/>
    <property type="match status" value="1"/>
</dbReference>
<dbReference type="HAMAP" id="MF_00531">
    <property type="entry name" value="Ribosomal_uS19"/>
    <property type="match status" value="1"/>
</dbReference>
<dbReference type="InterPro" id="IPR002222">
    <property type="entry name" value="Ribosomal_uS19"/>
</dbReference>
<dbReference type="InterPro" id="IPR005713">
    <property type="entry name" value="Ribosomal_uS19_euk/arc"/>
</dbReference>
<dbReference type="InterPro" id="IPR023575">
    <property type="entry name" value="Ribosomal_uS19_SF"/>
</dbReference>
<dbReference type="NCBIfam" id="NF003121">
    <property type="entry name" value="PRK04038.1"/>
    <property type="match status" value="1"/>
</dbReference>
<dbReference type="NCBIfam" id="TIGR01025">
    <property type="entry name" value="uS19_arch"/>
    <property type="match status" value="1"/>
</dbReference>
<dbReference type="PANTHER" id="PTHR11880">
    <property type="entry name" value="RIBOSOMAL PROTEIN S19P FAMILY MEMBER"/>
    <property type="match status" value="1"/>
</dbReference>
<dbReference type="PANTHER" id="PTHR11880:SF2">
    <property type="entry name" value="SMALL RIBOSOMAL SUBUNIT PROTEIN US19"/>
    <property type="match status" value="1"/>
</dbReference>
<dbReference type="Pfam" id="PF00203">
    <property type="entry name" value="Ribosomal_S19"/>
    <property type="match status" value="1"/>
</dbReference>
<dbReference type="PIRSF" id="PIRSF002144">
    <property type="entry name" value="Ribosomal_S19"/>
    <property type="match status" value="1"/>
</dbReference>
<dbReference type="PRINTS" id="PR00975">
    <property type="entry name" value="RIBOSOMALS19"/>
</dbReference>
<dbReference type="SUPFAM" id="SSF54570">
    <property type="entry name" value="Ribosomal protein S19"/>
    <property type="match status" value="1"/>
</dbReference>
<proteinExistence type="inferred from homology"/>
<feature type="chain" id="PRO_0000354318" description="Small ribosomal subunit protein uS19">
    <location>
        <begin position="1"/>
        <end position="136"/>
    </location>
</feature>
<accession>A2SPK7</accession>
<keyword id="KW-1185">Reference proteome</keyword>
<keyword id="KW-0687">Ribonucleoprotein</keyword>
<keyword id="KW-0689">Ribosomal protein</keyword>
<keyword id="KW-0694">RNA-binding</keyword>
<keyword id="KW-0699">rRNA-binding</keyword>
<comment type="function">
    <text evidence="1">Protein S19 forms a complex with S13 that binds strongly to the 16S ribosomal RNA.</text>
</comment>
<comment type="similarity">
    <text evidence="1">Belongs to the universal ribosomal protein uS19 family.</text>
</comment>
<organism>
    <name type="scientific">Methanocorpusculum labreanum (strain ATCC 43576 / DSM 4855 / Z)</name>
    <dbReference type="NCBI Taxonomy" id="410358"/>
    <lineage>
        <taxon>Archaea</taxon>
        <taxon>Methanobacteriati</taxon>
        <taxon>Methanobacteriota</taxon>
        <taxon>Stenosarchaea group</taxon>
        <taxon>Methanomicrobia</taxon>
        <taxon>Methanomicrobiales</taxon>
        <taxon>Methanocorpusculaceae</taxon>
        <taxon>Methanocorpusculum</taxon>
    </lineage>
</organism>
<protein>
    <recommendedName>
        <fullName evidence="1">Small ribosomal subunit protein uS19</fullName>
    </recommendedName>
    <alternativeName>
        <fullName evidence="2">30S ribosomal protein S19</fullName>
    </alternativeName>
</protein>
<evidence type="ECO:0000255" key="1">
    <source>
        <dbReference type="HAMAP-Rule" id="MF_00531"/>
    </source>
</evidence>
<evidence type="ECO:0000305" key="2"/>
<name>RS19_METLZ</name>
<sequence>MAKKTTKRMPKRREEYTYHGYNIEQLKAMSMDELLAIMPSGARRKVLRGFTRDEEDVRAKIAEGDGVRTHSRSMIILPEMVGKNVAIYSGKEFINVEIPVEGVFHYFGEFALTRKKVTHGSAGIGATKSSKYVPLK</sequence>
<reference key="1">
    <citation type="journal article" date="2009" name="Stand. Genomic Sci.">
        <title>Complete genome sequence of Methanocorpusculum labreanum type strain Z.</title>
        <authorList>
            <person name="Anderson I.J."/>
            <person name="Sieprawska-Lupa M."/>
            <person name="Goltsman E."/>
            <person name="Lapidus A."/>
            <person name="Copeland A."/>
            <person name="Glavina Del Rio T."/>
            <person name="Tice H."/>
            <person name="Dalin E."/>
            <person name="Barry K."/>
            <person name="Pitluck S."/>
            <person name="Hauser L."/>
            <person name="Land M."/>
            <person name="Lucas S."/>
            <person name="Richardson P."/>
            <person name="Whitman W.B."/>
            <person name="Kyrpides N.C."/>
        </authorList>
    </citation>
    <scope>NUCLEOTIDE SEQUENCE [LARGE SCALE GENOMIC DNA]</scope>
    <source>
        <strain>ATCC 43576 / DSM 4855 / Z</strain>
    </source>
</reference>